<feature type="chain" id="PRO_1000052664" description="Large ribosomal subunit protein uL22">
    <location>
        <begin position="1"/>
        <end position="114"/>
    </location>
</feature>
<reference key="1">
    <citation type="journal article" date="2006" name="Proc. Natl. Acad. Sci. U.S.A.">
        <title>Molecular genetic anatomy of inter- and intraserotype variation in the human bacterial pathogen group A Streptococcus.</title>
        <authorList>
            <person name="Beres S.B."/>
            <person name="Richter E.W."/>
            <person name="Nagiec M.J."/>
            <person name="Sumby P."/>
            <person name="Porcella S.F."/>
            <person name="DeLeo F.R."/>
            <person name="Musser J.M."/>
        </authorList>
    </citation>
    <scope>NUCLEOTIDE SEQUENCE [LARGE SCALE GENOMIC DNA]</scope>
    <source>
        <strain>MGAS10750</strain>
    </source>
</reference>
<protein>
    <recommendedName>
        <fullName evidence="1">Large ribosomal subunit protein uL22</fullName>
    </recommendedName>
    <alternativeName>
        <fullName evidence="2">50S ribosomal protein L22</fullName>
    </alternativeName>
</protein>
<accession>Q1J909</accession>
<keyword id="KW-0687">Ribonucleoprotein</keyword>
<keyword id="KW-0689">Ribosomal protein</keyword>
<keyword id="KW-0694">RNA-binding</keyword>
<keyword id="KW-0699">rRNA-binding</keyword>
<organism>
    <name type="scientific">Streptococcus pyogenes serotype M4 (strain MGAS10750)</name>
    <dbReference type="NCBI Taxonomy" id="370554"/>
    <lineage>
        <taxon>Bacteria</taxon>
        <taxon>Bacillati</taxon>
        <taxon>Bacillota</taxon>
        <taxon>Bacilli</taxon>
        <taxon>Lactobacillales</taxon>
        <taxon>Streptococcaceae</taxon>
        <taxon>Streptococcus</taxon>
    </lineage>
</organism>
<gene>
    <name evidence="1" type="primary">rplV</name>
    <name type="ordered locus">MGAS10750_Spy0052</name>
</gene>
<dbReference type="EMBL" id="CP000262">
    <property type="protein sequence ID" value="ABF37002.1"/>
    <property type="molecule type" value="Genomic_DNA"/>
</dbReference>
<dbReference type="SMR" id="Q1J909"/>
<dbReference type="KEGG" id="spi:MGAS10750_Spy0052"/>
<dbReference type="HOGENOM" id="CLU_083987_3_3_9"/>
<dbReference type="Proteomes" id="UP000002434">
    <property type="component" value="Chromosome"/>
</dbReference>
<dbReference type="GO" id="GO:0022625">
    <property type="term" value="C:cytosolic large ribosomal subunit"/>
    <property type="evidence" value="ECO:0007669"/>
    <property type="project" value="TreeGrafter"/>
</dbReference>
<dbReference type="GO" id="GO:0019843">
    <property type="term" value="F:rRNA binding"/>
    <property type="evidence" value="ECO:0007669"/>
    <property type="project" value="UniProtKB-UniRule"/>
</dbReference>
<dbReference type="GO" id="GO:0003735">
    <property type="term" value="F:structural constituent of ribosome"/>
    <property type="evidence" value="ECO:0007669"/>
    <property type="project" value="InterPro"/>
</dbReference>
<dbReference type="GO" id="GO:0006412">
    <property type="term" value="P:translation"/>
    <property type="evidence" value="ECO:0007669"/>
    <property type="project" value="UniProtKB-UniRule"/>
</dbReference>
<dbReference type="CDD" id="cd00336">
    <property type="entry name" value="Ribosomal_L22"/>
    <property type="match status" value="1"/>
</dbReference>
<dbReference type="FunFam" id="3.90.470.10:FF:000001">
    <property type="entry name" value="50S ribosomal protein L22"/>
    <property type="match status" value="1"/>
</dbReference>
<dbReference type="Gene3D" id="3.90.470.10">
    <property type="entry name" value="Ribosomal protein L22/L17"/>
    <property type="match status" value="1"/>
</dbReference>
<dbReference type="HAMAP" id="MF_01331_B">
    <property type="entry name" value="Ribosomal_uL22_B"/>
    <property type="match status" value="1"/>
</dbReference>
<dbReference type="InterPro" id="IPR001063">
    <property type="entry name" value="Ribosomal_uL22"/>
</dbReference>
<dbReference type="InterPro" id="IPR005727">
    <property type="entry name" value="Ribosomal_uL22_bac/chlpt-type"/>
</dbReference>
<dbReference type="InterPro" id="IPR047867">
    <property type="entry name" value="Ribosomal_uL22_bac/org-type"/>
</dbReference>
<dbReference type="InterPro" id="IPR018260">
    <property type="entry name" value="Ribosomal_uL22_CS"/>
</dbReference>
<dbReference type="InterPro" id="IPR036394">
    <property type="entry name" value="Ribosomal_uL22_sf"/>
</dbReference>
<dbReference type="NCBIfam" id="TIGR01044">
    <property type="entry name" value="rplV_bact"/>
    <property type="match status" value="1"/>
</dbReference>
<dbReference type="PANTHER" id="PTHR13501">
    <property type="entry name" value="CHLOROPLAST 50S RIBOSOMAL PROTEIN L22-RELATED"/>
    <property type="match status" value="1"/>
</dbReference>
<dbReference type="PANTHER" id="PTHR13501:SF8">
    <property type="entry name" value="LARGE RIBOSOMAL SUBUNIT PROTEIN UL22M"/>
    <property type="match status" value="1"/>
</dbReference>
<dbReference type="Pfam" id="PF00237">
    <property type="entry name" value="Ribosomal_L22"/>
    <property type="match status" value="1"/>
</dbReference>
<dbReference type="SUPFAM" id="SSF54843">
    <property type="entry name" value="Ribosomal protein L22"/>
    <property type="match status" value="1"/>
</dbReference>
<dbReference type="PROSITE" id="PS00464">
    <property type="entry name" value="RIBOSOMAL_L22"/>
    <property type="match status" value="1"/>
</dbReference>
<name>RL22_STRPF</name>
<evidence type="ECO:0000255" key="1">
    <source>
        <dbReference type="HAMAP-Rule" id="MF_01331"/>
    </source>
</evidence>
<evidence type="ECO:0000305" key="2"/>
<sequence>MAEITSAKAMARTVRVSPRKTRLVLDLIRGKKVADAIAILKFTPNKAARVIEKTLNSAIANAENNFGLEKANLVVSETFANEGPTMKRFRPRAKGSASPINKRTTHVTVVVSEK</sequence>
<proteinExistence type="inferred from homology"/>
<comment type="function">
    <text evidence="1">This protein binds specifically to 23S rRNA; its binding is stimulated by other ribosomal proteins, e.g. L4, L17, and L20. It is important during the early stages of 50S assembly. It makes multiple contacts with different domains of the 23S rRNA in the assembled 50S subunit and ribosome (By similarity).</text>
</comment>
<comment type="function">
    <text evidence="1">The globular domain of the protein is located near the polypeptide exit tunnel on the outside of the subunit, while an extended beta-hairpin is found that lines the wall of the exit tunnel in the center of the 70S ribosome.</text>
</comment>
<comment type="subunit">
    <text evidence="1">Part of the 50S ribosomal subunit.</text>
</comment>
<comment type="similarity">
    <text evidence="1">Belongs to the universal ribosomal protein uL22 family.</text>
</comment>